<protein>
    <recommendedName>
        <fullName>Paternally-expressed gene 3 protein</fullName>
    </recommendedName>
</protein>
<proteinExistence type="inferred from homology"/>
<evidence type="ECO:0000250" key="1"/>
<evidence type="ECO:0000255" key="2">
    <source>
        <dbReference type="PROSITE-ProRule" id="PRU00042"/>
    </source>
</evidence>
<evidence type="ECO:0000255" key="3">
    <source>
        <dbReference type="PROSITE-ProRule" id="PRU00187"/>
    </source>
</evidence>
<evidence type="ECO:0000256" key="4">
    <source>
        <dbReference type="SAM" id="MobiDB-lite"/>
    </source>
</evidence>
<evidence type="ECO:0000305" key="5"/>
<organism>
    <name type="scientific">Gorilla gorilla gorilla</name>
    <name type="common">Western lowland gorilla</name>
    <dbReference type="NCBI Taxonomy" id="9595"/>
    <lineage>
        <taxon>Eukaryota</taxon>
        <taxon>Metazoa</taxon>
        <taxon>Chordata</taxon>
        <taxon>Craniata</taxon>
        <taxon>Vertebrata</taxon>
        <taxon>Euteleostomi</taxon>
        <taxon>Mammalia</taxon>
        <taxon>Eutheria</taxon>
        <taxon>Euarchontoglires</taxon>
        <taxon>Primates</taxon>
        <taxon>Haplorrhini</taxon>
        <taxon>Catarrhini</taxon>
        <taxon>Hominidae</taxon>
        <taxon>Gorilla</taxon>
    </lineage>
</organism>
<feature type="chain" id="PRO_0000285532" description="Paternally-expressed gene 3 protein">
    <location>
        <begin position="1"/>
        <end position="1589"/>
    </location>
</feature>
<feature type="domain" description="SCAN box" evidence="3">
    <location>
        <begin position="46"/>
        <end position="128"/>
    </location>
</feature>
<feature type="repeat" description="2-1">
    <location>
        <begin position="1398"/>
        <end position="1404"/>
    </location>
</feature>
<feature type="repeat" description="2-2">
    <location>
        <begin position="1405"/>
        <end position="1411"/>
    </location>
</feature>
<feature type="repeat" description="2-3">
    <location>
        <begin position="1412"/>
        <end position="1418"/>
    </location>
</feature>
<feature type="repeat" description="1-1">
    <location>
        <begin position="1419"/>
        <end position="1423"/>
    </location>
</feature>
<feature type="repeat" description="1-2">
    <location>
        <begin position="1426"/>
        <end position="1430"/>
    </location>
</feature>
<feature type="repeat" description="1-3">
    <location>
        <begin position="1433"/>
        <end position="1437"/>
    </location>
</feature>
<feature type="repeat" description="1-4">
    <location>
        <begin position="1440"/>
        <end position="1444"/>
    </location>
</feature>
<feature type="zinc finger region" description="C2H2-type 1" evidence="2">
    <location>
        <begin position="454"/>
        <end position="476"/>
    </location>
</feature>
<feature type="zinc finger region" description="C2H2-type 2" evidence="2">
    <location>
        <begin position="507"/>
        <end position="529"/>
    </location>
</feature>
<feature type="zinc finger region" description="C2H2-type 3" evidence="2">
    <location>
        <begin position="565"/>
        <end position="587"/>
    </location>
</feature>
<feature type="zinc finger region" description="C2H2-type 4" evidence="2">
    <location>
        <begin position="627"/>
        <end position="649"/>
    </location>
</feature>
<feature type="zinc finger region" description="C2H2-type 5" evidence="2">
    <location>
        <begin position="969"/>
        <end position="991"/>
    </location>
</feature>
<feature type="zinc finger region" description="C2H2-type 6" evidence="2">
    <location>
        <begin position="1107"/>
        <end position="1129"/>
    </location>
</feature>
<feature type="zinc finger region" description="C2H2-type 7" evidence="2">
    <location>
        <begin position="1163"/>
        <end position="1185"/>
    </location>
</feature>
<feature type="zinc finger region" description="C2H2-type 8" evidence="2">
    <location>
        <begin position="1225"/>
        <end position="1247"/>
    </location>
</feature>
<feature type="zinc finger region" description="C2H2-type 9" evidence="2">
    <location>
        <begin position="1282"/>
        <end position="1304"/>
    </location>
</feature>
<feature type="zinc finger region" description="C2H2-type 10" evidence="2">
    <location>
        <begin position="1332"/>
        <end position="1354"/>
    </location>
</feature>
<feature type="zinc finger region" description="C2H2-type 11" evidence="2">
    <location>
        <begin position="1506"/>
        <end position="1528"/>
    </location>
</feature>
<feature type="zinc finger region" description="C2H2-type 12" evidence="2">
    <location>
        <begin position="1565"/>
        <end position="1587"/>
    </location>
</feature>
<feature type="region of interest" description="Disordered" evidence="4">
    <location>
        <begin position="128"/>
        <end position="230"/>
    </location>
</feature>
<feature type="region of interest" description="Disordered" evidence="4">
    <location>
        <begin position="266"/>
        <end position="306"/>
    </location>
</feature>
<feature type="region of interest" description="Disordered" evidence="4">
    <location>
        <begin position="319"/>
        <end position="349"/>
    </location>
</feature>
<feature type="region of interest" description="Disordered" evidence="4">
    <location>
        <begin position="588"/>
        <end position="610"/>
    </location>
</feature>
<feature type="region of interest" description="Disordered" evidence="4">
    <location>
        <begin position="838"/>
        <end position="930"/>
    </location>
</feature>
<feature type="region of interest" description="Disordered" evidence="4">
    <location>
        <begin position="1056"/>
        <end position="1104"/>
    </location>
</feature>
<feature type="region of interest" description="Disordered" evidence="4">
    <location>
        <begin position="1396"/>
        <end position="1496"/>
    </location>
</feature>
<feature type="region of interest" description="3 X 7 AA repeat of P-E-V-E-A-A-E">
    <location>
        <begin position="1398"/>
        <end position="1418"/>
    </location>
</feature>
<feature type="region of interest" description="4 X 5 AA repeat of P-X-G-E-A">
    <location>
        <begin position="1419"/>
        <end position="1444"/>
    </location>
</feature>
<feature type="compositionally biased region" description="Acidic residues" evidence="4">
    <location>
        <begin position="129"/>
        <end position="142"/>
    </location>
</feature>
<feature type="compositionally biased region" description="Basic and acidic residues" evidence="4">
    <location>
        <begin position="143"/>
        <end position="152"/>
    </location>
</feature>
<feature type="compositionally biased region" description="Basic and acidic residues" evidence="4">
    <location>
        <begin position="161"/>
        <end position="182"/>
    </location>
</feature>
<feature type="compositionally biased region" description="Basic and acidic residues" evidence="4">
    <location>
        <begin position="206"/>
        <end position="225"/>
    </location>
</feature>
<feature type="compositionally biased region" description="Basic and acidic residues" evidence="4">
    <location>
        <begin position="295"/>
        <end position="306"/>
    </location>
</feature>
<feature type="compositionally biased region" description="Basic and acidic residues" evidence="4">
    <location>
        <begin position="588"/>
        <end position="607"/>
    </location>
</feature>
<feature type="compositionally biased region" description="Basic and acidic residues" evidence="4">
    <location>
        <begin position="868"/>
        <end position="881"/>
    </location>
</feature>
<feature type="compositionally biased region" description="Basic and acidic residues" evidence="4">
    <location>
        <begin position="1071"/>
        <end position="1082"/>
    </location>
</feature>
<feature type="compositionally biased region" description="Acidic residues" evidence="4">
    <location>
        <begin position="1396"/>
        <end position="1416"/>
    </location>
</feature>
<feature type="compositionally biased region" description="Acidic residues" evidence="4">
    <location>
        <begin position="1450"/>
        <end position="1467"/>
    </location>
</feature>
<feature type="compositionally biased region" description="Acidic residues" evidence="4">
    <location>
        <begin position="1476"/>
        <end position="1496"/>
    </location>
</feature>
<gene>
    <name type="primary">PEG3</name>
</gene>
<dbReference type="EMBL" id="DQ976560">
    <property type="protein sequence ID" value="ABM46839.1"/>
    <property type="molecule type" value="Genomic_DNA"/>
</dbReference>
<dbReference type="FunCoup" id="A1YFC1">
    <property type="interactions" value="263"/>
</dbReference>
<dbReference type="STRING" id="9593.ENSGGOP00000004993"/>
<dbReference type="eggNOG" id="KOG1721">
    <property type="taxonomic scope" value="Eukaryota"/>
</dbReference>
<dbReference type="InParanoid" id="A1YFC1"/>
<dbReference type="Proteomes" id="UP000001519">
    <property type="component" value="Unplaced"/>
</dbReference>
<dbReference type="GO" id="GO:0005737">
    <property type="term" value="C:cytoplasm"/>
    <property type="evidence" value="ECO:0007669"/>
    <property type="project" value="UniProtKB-SubCell"/>
</dbReference>
<dbReference type="GO" id="GO:0005634">
    <property type="term" value="C:nucleus"/>
    <property type="evidence" value="ECO:0000318"/>
    <property type="project" value="GO_Central"/>
</dbReference>
<dbReference type="GO" id="GO:0000981">
    <property type="term" value="F:DNA-binding transcription factor activity, RNA polymerase II-specific"/>
    <property type="evidence" value="ECO:0000318"/>
    <property type="project" value="GO_Central"/>
</dbReference>
<dbReference type="GO" id="GO:0000977">
    <property type="term" value="F:RNA polymerase II transcription regulatory region sequence-specific DNA binding"/>
    <property type="evidence" value="ECO:0000318"/>
    <property type="project" value="GO_Central"/>
</dbReference>
<dbReference type="GO" id="GO:0008270">
    <property type="term" value="F:zinc ion binding"/>
    <property type="evidence" value="ECO:0007669"/>
    <property type="project" value="UniProtKB-KW"/>
</dbReference>
<dbReference type="GO" id="GO:0006915">
    <property type="term" value="P:apoptotic process"/>
    <property type="evidence" value="ECO:0007669"/>
    <property type="project" value="UniProtKB-KW"/>
</dbReference>
<dbReference type="GO" id="GO:0006357">
    <property type="term" value="P:regulation of transcription by RNA polymerase II"/>
    <property type="evidence" value="ECO:0000318"/>
    <property type="project" value="GO_Central"/>
</dbReference>
<dbReference type="CDD" id="cd07936">
    <property type="entry name" value="SCAN"/>
    <property type="match status" value="1"/>
</dbReference>
<dbReference type="FunFam" id="3.30.160.60:FF:002668">
    <property type="entry name" value="Paternally expressed 3"/>
    <property type="match status" value="1"/>
</dbReference>
<dbReference type="FunFam" id="3.30.160.60:FF:001889">
    <property type="entry name" value="Paternally-expressed gene 3 protein"/>
    <property type="match status" value="1"/>
</dbReference>
<dbReference type="FunFam" id="3.30.160.60:FF:002011">
    <property type="entry name" value="Paternally-expressed gene 3 protein"/>
    <property type="match status" value="1"/>
</dbReference>
<dbReference type="FunFam" id="3.30.160.60:FF:002100">
    <property type="entry name" value="Paternally-expressed gene 3 protein"/>
    <property type="match status" value="1"/>
</dbReference>
<dbReference type="FunFam" id="3.30.160.60:FF:003286">
    <property type="entry name" value="Paternally-expressed gene 3 protein"/>
    <property type="match status" value="1"/>
</dbReference>
<dbReference type="FunFam" id="3.30.160.60:FF:001328">
    <property type="entry name" value="paternally-expressed gene 3 protein"/>
    <property type="match status" value="2"/>
</dbReference>
<dbReference type="FunFam" id="3.30.160.60:FF:001757">
    <property type="entry name" value="paternally-expressed gene 3 protein isoform X1"/>
    <property type="match status" value="1"/>
</dbReference>
<dbReference type="FunFam" id="3.30.160.60:FF:000661">
    <property type="entry name" value="paternally-expressed gene 3 protein-like"/>
    <property type="match status" value="1"/>
</dbReference>
<dbReference type="FunFam" id="1.10.4020.10:FF:000001">
    <property type="entry name" value="zinc finger protein 263 isoform X1"/>
    <property type="match status" value="1"/>
</dbReference>
<dbReference type="Gene3D" id="3.30.160.60">
    <property type="entry name" value="Classic Zinc Finger"/>
    <property type="match status" value="10"/>
</dbReference>
<dbReference type="Gene3D" id="1.10.4020.10">
    <property type="entry name" value="DNA breaking-rejoining enzymes"/>
    <property type="match status" value="1"/>
</dbReference>
<dbReference type="InterPro" id="IPR050752">
    <property type="entry name" value="C2H2-ZF_domain"/>
</dbReference>
<dbReference type="InterPro" id="IPR003309">
    <property type="entry name" value="SCAN_dom"/>
</dbReference>
<dbReference type="InterPro" id="IPR038269">
    <property type="entry name" value="SCAN_sf"/>
</dbReference>
<dbReference type="InterPro" id="IPR036236">
    <property type="entry name" value="Znf_C2H2_sf"/>
</dbReference>
<dbReference type="InterPro" id="IPR013087">
    <property type="entry name" value="Znf_C2H2_type"/>
</dbReference>
<dbReference type="PANTHER" id="PTHR24384">
    <property type="entry name" value="FINGER PUTATIVE TRANSCRIPTION FACTOR FAMILY-RELATED"/>
    <property type="match status" value="1"/>
</dbReference>
<dbReference type="PANTHER" id="PTHR24384:SF6">
    <property type="entry name" value="ZINC FINGER PROTEIN 114"/>
    <property type="match status" value="1"/>
</dbReference>
<dbReference type="Pfam" id="PF02023">
    <property type="entry name" value="SCAN"/>
    <property type="match status" value="1"/>
</dbReference>
<dbReference type="Pfam" id="PF00096">
    <property type="entry name" value="zf-C2H2"/>
    <property type="match status" value="10"/>
</dbReference>
<dbReference type="Pfam" id="PF13912">
    <property type="entry name" value="zf-C2H2_6"/>
    <property type="match status" value="1"/>
</dbReference>
<dbReference type="SMART" id="SM00431">
    <property type="entry name" value="SCAN"/>
    <property type="match status" value="1"/>
</dbReference>
<dbReference type="SMART" id="SM00355">
    <property type="entry name" value="ZnF_C2H2"/>
    <property type="match status" value="12"/>
</dbReference>
<dbReference type="SUPFAM" id="SSF57667">
    <property type="entry name" value="beta-beta-alpha zinc fingers"/>
    <property type="match status" value="9"/>
</dbReference>
<dbReference type="SUPFAM" id="SSF47353">
    <property type="entry name" value="Retrovirus capsid dimerization domain-like"/>
    <property type="match status" value="1"/>
</dbReference>
<dbReference type="PROSITE" id="PS50804">
    <property type="entry name" value="SCAN_BOX"/>
    <property type="match status" value="1"/>
</dbReference>
<dbReference type="PROSITE" id="PS00028">
    <property type="entry name" value="ZINC_FINGER_C2H2_1"/>
    <property type="match status" value="12"/>
</dbReference>
<dbReference type="PROSITE" id="PS50157">
    <property type="entry name" value="ZINC_FINGER_C2H2_2"/>
    <property type="match status" value="12"/>
</dbReference>
<accession>A1YFC1</accession>
<sequence>MLPPKHLSATKPKKSWAPNLYELDSDLTKEPDVIIGEGPTDSEFFHQRFRNLIYVEFVGPRKTLIKLRNLCLDWLQPETRTKEEIIELLVLEQYLTIIPEKLKPWVRAKKPENCEKLVTLLENYKEMYQPEDDNNSDVTSDDDMTRNRRESSPPHSVHSFSGDRDWDRRGRSRDMEPRDRWSHTRNPRSRMPQRDLSLPVVAKTSFEMDRDDDRDSRAYESRSQDAESYQNVVDLAEDRKPHNTIQDNMENYRKLLSLGVQLAEDDGHSHMTQGHSSRSKRSAYPSTSRGLKTMPEAKKSTHRRGICEDESSHGVIMEKFIKDVSRSSKSGRARESSDRSQRFPRMSDDNWKDISLNKRESVIQQRVYEGNAFRGGFRFNSTLVSRKRVLERKRRYHFDTDGKGSIHDQKGCPRKKPFECGSEMRKAMSMSSLSSLSSPSFTESQPIDFGAMPYVCDECGRSFSVISEFVEHQIMHTRENLYEYGESFIHSVAVSEVQKSQVGGKRFECKDCGETFNKSAALAEHRKIHARGYLVECKNQECEEAFMPSPTFSELQKIYGKDKFYECRVCKETFLHSSALIEHQKIHFGDDKDNEREHERERERGETFRPSPALNEFQKMYGKEKMYECKVCGETFLHSSSLKEHQKIHTRGNPFENKGKVCEETFIPGQSLKRRQKTYNKEKLYDFTDGRDAFMQSSELSEHQKIHSRKNLFEGRGYEKSVIHSGPFTESQKSHTITRPLESDEDEKAFTISSNPYENQKIPTKENVYEAKSYERSVIHSLASVEAQKSHSVAGPSKPKVMAESTIQSFDAINHQRVRAGGNTSEGREYNRSVIHSLVASKPPRSHNGNELVESNEKGESSIYISDLNDKRQKIPARENPCEGGSKNRNYEDSVIQSVSRAKPQKSVPGEGSGEFKKDGEFSVPSSNVREYQKARAKKKYIEHRSNETSVIHSLPFGEQTFRPRGMLYECQECGECFAHSSDLTEHQKIHDREKPSGSRNYEWSVIRSLAPTDPQTSYAQEQYAKEQARNKCKEFRQFFATSEDLNTNQKIYDQEKSHGEESQGENTDGEETHSEETHGQETIEDPVIQSSDMEDPQKDDPDDKIYECEDCGLGFVDLTDLTDHQKVHSRKCLVDSREYTHSVIHTHSISEYQRDYTGEQLYECPKCGESFIHSSFLFEHQRIHEQDQLYSMKGCDDGFIALLPMKPRRNRAAERNPALAGSAIRCLLCGQGFIHSSALNEHMRLHREDDLLEQSQMVEEAIIPGLALTEFQRSQTEERLFECAVCGESFVNPAELADHVTVHKNEPYEYGSSYTHTSFLTEPLKGAIPFYECKDCGKSFIHSTVLTKHKELHLEEEEEEDEAAAAAAAAAQEVEANVHVPQVVLRIQGSNVEAAEPEVEAAEPEVEAAEPEVEAAEPNGEAEGPDGEAAEPIGEAGQPNGEAEQPNGDADEPDGAGIEDPEERAEEPEGKAEEPEGDADEPDGVGIEDPEEGEDQEIQVEEPYYDCHECTETFTSSTAFGEHLKTHASMIIFEPADAFGECSGYIERASTSTGGANQADEKYFKCDVCGQLFNDRLSLARHQNTHTG</sequence>
<name>PEG3_GORGO</name>
<comment type="function">
    <text evidence="1">Induces apoptosis in cooperation with SIAH1A. Acts as a mediator between p53/TP53 and BAX in a neuronal death pathway that is activated by DNA damage. Acts synergistically with TRAF2 and inhibits TNF induced apoptosis through activation of NF-kappa-B (By similarity).</text>
</comment>
<comment type="subunit">
    <text evidence="1">Homodimer. Interacts with SIAH1A and SIAH2. Interacts with TRAF2 (By similarity).</text>
</comment>
<comment type="subcellular location">
    <subcellularLocation>
        <location evidence="3">Nucleus</location>
    </subcellularLocation>
    <subcellularLocation>
        <location evidence="1">Cytoplasm</location>
    </subcellularLocation>
</comment>
<comment type="domain">
    <text evidence="1">The SCAN domain enables PEG3 homo- or heterodimerization to control gene expression in a combinatorial fashion.</text>
</comment>
<comment type="similarity">
    <text evidence="5">Belongs to the krueppel C2H2-type zinc-finger protein family.</text>
</comment>
<keyword id="KW-0053">Apoptosis</keyword>
<keyword id="KW-0963">Cytoplasm</keyword>
<keyword id="KW-0479">Metal-binding</keyword>
<keyword id="KW-0539">Nucleus</keyword>
<keyword id="KW-1185">Reference proteome</keyword>
<keyword id="KW-0677">Repeat</keyword>
<keyword id="KW-0862">Zinc</keyword>
<keyword id="KW-0863">Zinc-finger</keyword>
<reference key="1">
    <citation type="submission" date="2006-08" db="EMBL/GenBank/DDBJ databases">
        <title>Positive selection in transcription factor genes on the human lineage.</title>
        <authorList>
            <person name="Nickel G.C."/>
            <person name="Tefft D.L."/>
            <person name="Trevarthen K."/>
            <person name="Funt J."/>
            <person name="Adams M.D."/>
        </authorList>
    </citation>
    <scope>NUCLEOTIDE SEQUENCE [GENOMIC DNA]</scope>
</reference>